<feature type="chain" id="PRO_0000418409" description="Isocitrate/homoisocitrate dehydrogenase">
    <location>
        <begin position="1"/>
        <end position="345"/>
    </location>
</feature>
<feature type="binding site" evidence="1">
    <location>
        <begin position="69"/>
        <end position="71"/>
    </location>
    <ligand>
        <name>NADH</name>
        <dbReference type="ChEBI" id="CHEBI:57945"/>
    </ligand>
</feature>
<feature type="binding site" description="in other chain" evidence="1">
    <location>
        <position position="86"/>
    </location>
    <ligand>
        <name>(2R,3S)-homoisocitrate</name>
        <dbReference type="ChEBI" id="CHEBI:15404"/>
        <note>ligand shared between homodimeric partners</note>
    </ligand>
</feature>
<feature type="binding site" description="in other chain" evidence="1">
    <location>
        <position position="96"/>
    </location>
    <ligand>
        <name>(2R,3S)-homoisocitrate</name>
        <dbReference type="ChEBI" id="CHEBI:15404"/>
        <note>ligand shared between homodimeric partners</note>
    </ligand>
</feature>
<feature type="binding site" description="in other chain" evidence="1">
    <location>
        <position position="111"/>
    </location>
    <ligand>
        <name>(2R,3S)-homoisocitrate</name>
        <dbReference type="ChEBI" id="CHEBI:15404"/>
        <note>ligand shared between homodimeric partners</note>
    </ligand>
</feature>
<feature type="binding site" description="in other chain" evidence="1">
    <location>
        <position position="118"/>
    </location>
    <ligand>
        <name>(2R,3S)-homoisocitrate</name>
        <dbReference type="ChEBI" id="CHEBI:15404"/>
        <note>ligand shared between homodimeric partners</note>
    </ligand>
</feature>
<feature type="binding site" evidence="1">
    <location>
        <position position="163"/>
    </location>
    <ligand>
        <name>(2R,3S)-homoisocitrate</name>
        <dbReference type="ChEBI" id="CHEBI:15404"/>
        <note>ligand shared between homodimeric partners</note>
    </ligand>
</feature>
<feature type="binding site" evidence="1">
    <location>
        <position position="165"/>
    </location>
    <ligand>
        <name>(2R,3S)-homoisocitrate</name>
        <dbReference type="ChEBI" id="CHEBI:15404"/>
        <note>ligand shared between homodimeric partners</note>
    </ligand>
</feature>
<feature type="binding site" evidence="1">
    <location>
        <position position="165"/>
    </location>
    <ligand>
        <name>NADH</name>
        <dbReference type="ChEBI" id="CHEBI:57945"/>
    </ligand>
</feature>
<feature type="binding site" evidence="1">
    <location>
        <position position="194"/>
    </location>
    <ligand>
        <name>Mg(2+)</name>
        <dbReference type="ChEBI" id="CHEBI:18420"/>
    </ligand>
</feature>
<feature type="binding site" evidence="1">
    <location>
        <position position="218"/>
    </location>
    <ligand>
        <name>Mg(2+)</name>
        <dbReference type="ChEBI" id="CHEBI:18420"/>
    </ligand>
</feature>
<feature type="binding site" evidence="1">
    <location>
        <position position="222"/>
    </location>
    <ligand>
        <name>Mg(2+)</name>
        <dbReference type="ChEBI" id="CHEBI:18420"/>
    </ligand>
</feature>
<feature type="binding site" evidence="1">
    <location>
        <begin position="251"/>
        <end position="255"/>
    </location>
    <ligand>
        <name>NADH</name>
        <dbReference type="ChEBI" id="CHEBI:57945"/>
    </ligand>
</feature>
<feature type="binding site" evidence="1">
    <location>
        <position position="263"/>
    </location>
    <ligand>
        <name>NADH</name>
        <dbReference type="ChEBI" id="CHEBI:57945"/>
    </ligand>
</feature>
<accession>O59394</accession>
<organism>
    <name type="scientific">Pyrococcus horikoshii (strain ATCC 700860 / DSM 12428 / JCM 9974 / NBRC 100139 / OT-3)</name>
    <dbReference type="NCBI Taxonomy" id="70601"/>
    <lineage>
        <taxon>Archaea</taxon>
        <taxon>Methanobacteriati</taxon>
        <taxon>Methanobacteriota</taxon>
        <taxon>Thermococci</taxon>
        <taxon>Thermococcales</taxon>
        <taxon>Thermococcaceae</taxon>
        <taxon>Pyrococcus</taxon>
    </lineage>
</organism>
<reference key="1">
    <citation type="journal article" date="1998" name="DNA Res.">
        <title>Complete sequence and gene organization of the genome of a hyper-thermophilic archaebacterium, Pyrococcus horikoshii OT3.</title>
        <authorList>
            <person name="Kawarabayasi Y."/>
            <person name="Sawada M."/>
            <person name="Horikawa H."/>
            <person name="Haikawa Y."/>
            <person name="Hino Y."/>
            <person name="Yamamoto S."/>
            <person name="Sekine M."/>
            <person name="Baba S."/>
            <person name="Kosugi H."/>
            <person name="Hosoyama A."/>
            <person name="Nagai Y."/>
            <person name="Sakai M."/>
            <person name="Ogura K."/>
            <person name="Otsuka R."/>
            <person name="Nakazawa H."/>
            <person name="Takamiya M."/>
            <person name="Ohfuku Y."/>
            <person name="Funahashi T."/>
            <person name="Tanaka T."/>
            <person name="Kudoh Y."/>
            <person name="Yamazaki J."/>
            <person name="Kushida N."/>
            <person name="Oguchi A."/>
            <person name="Aoki K."/>
            <person name="Yoshizawa T."/>
            <person name="Nakamura Y."/>
            <person name="Robb F.T."/>
            <person name="Horikoshi K."/>
            <person name="Masuchi Y."/>
            <person name="Shizuya H."/>
            <person name="Kikuchi H."/>
        </authorList>
    </citation>
    <scope>NUCLEOTIDE SEQUENCE [LARGE SCALE GENOMIC DNA]</scope>
    <source>
        <strain>ATCC 700860 / DSM 12428 / JCM 9974 / NBRC 100139 / OT-3</strain>
    </source>
</reference>
<reference key="2">
    <citation type="journal article" date="2005" name="Biochem. Biophys. Res. Commun.">
        <title>Bifunctional isocitrate-homoisocitrate dehydrogenase: a missing link in the evolution of beta-decarboxylating dehydrogenase.</title>
        <authorList>
            <person name="Miyazaki K."/>
        </authorList>
    </citation>
    <scope>FUNCTION</scope>
    <scope>CATALYTIC ACTIVITY</scope>
    <scope>COFACTOR</scope>
    <scope>BIOPHYSICOCHEMICAL PROPERTIES</scope>
    <scope>SUBSTRATE SPECIFICITY</scope>
</reference>
<evidence type="ECO:0000250" key="1">
    <source>
        <dbReference type="UniProtKB" id="Q72IW9"/>
    </source>
</evidence>
<evidence type="ECO:0000269" key="2">
    <source>
    </source>
</evidence>
<evidence type="ECO:0000303" key="3">
    <source>
    </source>
</evidence>
<evidence type="ECO:0000305" key="4"/>
<evidence type="ECO:0000305" key="5">
    <source>
    </source>
</evidence>
<name>HICDH_PYRHO</name>
<sequence>MYKVAVIKGDGIGPEVIDAAIRVVKSVTDKIKFYEFEGGLSVFKKYGVPIREEDLEEIRKMDAILFGATTTPFDVPRYKSLIITLRKELDLYANLRIIPNFKLRKEIIIVRENSEGLYSGEGAYDSNKVVDFRIITRKGAERIAKFAVKLAKDRSTFLTFVHKANILESDRFFRKIVLDIARKEDVKVREEIVDSFTIKLVKDPWNLGIILSENMFGDILSDLATIHAGSIGIVPSGNYGEDIALFEPIHGSAPDIAGKGIANPIGAILSAAMMLDYLGLDGSIIWKAVGRYVRRGNLTPDMEGRATTLEVTNGIISEIYRLDEYEIDEVWRDEVRLGRILLEIS</sequence>
<protein>
    <recommendedName>
        <fullName evidence="3">Isocitrate/homoisocitrate dehydrogenase</fullName>
        <shortName>HICDH</shortName>
        <ecNumber>1.1.1.286</ecNumber>
    </recommendedName>
    <alternativeName>
        <fullName>Beta-decarboxylating dehydrogenase</fullName>
    </alternativeName>
</protein>
<gene>
    <name type="ordered locus">PH1722</name>
</gene>
<proteinExistence type="evidence at protein level"/>
<comment type="function">
    <text evidence="2">Catalyzes the NAD(+)-dependent oxidative decarboxylation of homoisocitrate to 2-oxoadipate (alpha-ketoadipate), and of isocitrate to 2-oxoglutarate, at near equal efficiency. May thus play a dual role in glutamate and lysine biosynthesis in vivo. Preferentially uses NAD over NADP.</text>
</comment>
<comment type="catalytic activity">
    <reaction evidence="2">
        <text>D-threo-isocitrate + NAD(+) = 2-oxoglutarate + CO2 + NADH</text>
        <dbReference type="Rhea" id="RHEA:23632"/>
        <dbReference type="ChEBI" id="CHEBI:15562"/>
        <dbReference type="ChEBI" id="CHEBI:16526"/>
        <dbReference type="ChEBI" id="CHEBI:16810"/>
        <dbReference type="ChEBI" id="CHEBI:57540"/>
        <dbReference type="ChEBI" id="CHEBI:57945"/>
        <dbReference type="EC" id="1.1.1.286"/>
    </reaction>
    <physiologicalReaction direction="left-to-right" evidence="5">
        <dbReference type="Rhea" id="RHEA:23633"/>
    </physiologicalReaction>
</comment>
<comment type="catalytic activity">
    <reaction evidence="2">
        <text>(2R,3S)-homoisocitrate + NAD(+) = 2-oxoadipate + CO2 + NADH</text>
        <dbReference type="Rhea" id="RHEA:11900"/>
        <dbReference type="ChEBI" id="CHEBI:15404"/>
        <dbReference type="ChEBI" id="CHEBI:16526"/>
        <dbReference type="ChEBI" id="CHEBI:57499"/>
        <dbReference type="ChEBI" id="CHEBI:57540"/>
        <dbReference type="ChEBI" id="CHEBI:57945"/>
        <dbReference type="EC" id="1.1.1.286"/>
    </reaction>
    <physiologicalReaction direction="left-to-right" evidence="5">
        <dbReference type="Rhea" id="RHEA:11901"/>
    </physiologicalReaction>
</comment>
<comment type="cofactor">
    <cofactor evidence="2">
        <name>Mn(2+)</name>
        <dbReference type="ChEBI" id="CHEBI:29035"/>
    </cofactor>
    <cofactor evidence="1">
        <name>Mg(2+)</name>
        <dbReference type="ChEBI" id="CHEBI:18420"/>
    </cofactor>
</comment>
<comment type="biophysicochemical properties">
    <kinetics>
        <KM evidence="2">16.4 uM for isocitrate (at 70 degrees Celsius and pH 7.8)</KM>
        <KM evidence="2">18.3 uM for homoisocitrate (at 70 degrees Celsius and pH 7.8)</KM>
        <KM evidence="2">77.1 uM for NAD (at 70 degrees Celsius and pH 7.8)</KM>
        <text>kcat is 14.8 sec(-1) with isocitrate as substrate and 13.7 sec(-1) with homoisocitrate as substrate.</text>
    </kinetics>
</comment>
<comment type="pathway">
    <text evidence="5">Amino-acid biosynthesis; L-lysine biosynthesis via AAA pathway; L-alpha-aminoadipate from 2-oxoglutarate: step 4/5.</text>
</comment>
<comment type="similarity">
    <text evidence="4">Belongs to the isocitrate and isopropylmalate dehydrogenases family.</text>
</comment>
<comment type="sequence caution" evidence="4">
    <conflict type="erroneous initiation">
        <sequence resource="EMBL-CDS" id="BAA30836"/>
    </conflict>
    <text>Truncated N-terminus.</text>
</comment>
<keyword id="KW-0460">Magnesium</keyword>
<keyword id="KW-0464">Manganese</keyword>
<keyword id="KW-0479">Metal-binding</keyword>
<keyword id="KW-0520">NAD</keyword>
<keyword id="KW-0560">Oxidoreductase</keyword>
<dbReference type="EC" id="1.1.1.286"/>
<dbReference type="EMBL" id="BA000001">
    <property type="protein sequence ID" value="BAA30836.1"/>
    <property type="status" value="ALT_INIT"/>
    <property type="molecule type" value="Genomic_DNA"/>
</dbReference>
<dbReference type="PIR" id="E71180">
    <property type="entry name" value="E71180"/>
</dbReference>
<dbReference type="RefSeq" id="WP_010885787.1">
    <property type="nucleotide sequence ID" value="NC_000961.1"/>
</dbReference>
<dbReference type="SMR" id="O59394"/>
<dbReference type="STRING" id="70601.gene:9378718"/>
<dbReference type="EnsemblBacteria" id="BAA30836">
    <property type="protein sequence ID" value="BAA30836"/>
    <property type="gene ID" value="BAA30836"/>
</dbReference>
<dbReference type="GeneID" id="1442568"/>
<dbReference type="KEGG" id="pho:PH1722"/>
<dbReference type="eggNOG" id="arCOG01163">
    <property type="taxonomic scope" value="Archaea"/>
</dbReference>
<dbReference type="OrthoDB" id="6813at2157"/>
<dbReference type="UniPathway" id="UPA00033">
    <property type="reaction ID" value="UER00030"/>
</dbReference>
<dbReference type="Proteomes" id="UP000000752">
    <property type="component" value="Chromosome"/>
</dbReference>
<dbReference type="GO" id="GO:0003862">
    <property type="term" value="F:3-isopropylmalate dehydrogenase activity"/>
    <property type="evidence" value="ECO:0007669"/>
    <property type="project" value="InterPro"/>
</dbReference>
<dbReference type="GO" id="GO:0047046">
    <property type="term" value="F:homoisocitrate dehydrogenase activity"/>
    <property type="evidence" value="ECO:0007669"/>
    <property type="project" value="RHEA"/>
</dbReference>
<dbReference type="GO" id="GO:0004449">
    <property type="term" value="F:isocitrate dehydrogenase (NAD+) activity"/>
    <property type="evidence" value="ECO:0007669"/>
    <property type="project" value="RHEA"/>
</dbReference>
<dbReference type="GO" id="GO:0033708">
    <property type="term" value="F:isocitrate-homoisocitrate dehydrogenase activity"/>
    <property type="evidence" value="ECO:0000314"/>
    <property type="project" value="UniProtKB"/>
</dbReference>
<dbReference type="GO" id="GO:0000287">
    <property type="term" value="F:magnesium ion binding"/>
    <property type="evidence" value="ECO:0007669"/>
    <property type="project" value="InterPro"/>
</dbReference>
<dbReference type="GO" id="GO:0051287">
    <property type="term" value="F:NAD binding"/>
    <property type="evidence" value="ECO:0000314"/>
    <property type="project" value="UniProtKB"/>
</dbReference>
<dbReference type="GO" id="GO:0050661">
    <property type="term" value="F:NADP binding"/>
    <property type="evidence" value="ECO:0000314"/>
    <property type="project" value="UniProtKB"/>
</dbReference>
<dbReference type="GO" id="GO:0006102">
    <property type="term" value="P:isocitrate metabolic process"/>
    <property type="evidence" value="ECO:0007669"/>
    <property type="project" value="TreeGrafter"/>
</dbReference>
<dbReference type="GO" id="GO:0009098">
    <property type="term" value="P:L-leucine biosynthetic process"/>
    <property type="evidence" value="ECO:0007669"/>
    <property type="project" value="InterPro"/>
</dbReference>
<dbReference type="GO" id="GO:0019878">
    <property type="term" value="P:lysine biosynthetic process via aminoadipic acid"/>
    <property type="evidence" value="ECO:0007669"/>
    <property type="project" value="UniProtKB-UniPathway"/>
</dbReference>
<dbReference type="GO" id="GO:0006099">
    <property type="term" value="P:tricarboxylic acid cycle"/>
    <property type="evidence" value="ECO:0007669"/>
    <property type="project" value="TreeGrafter"/>
</dbReference>
<dbReference type="Gene3D" id="3.40.718.10">
    <property type="entry name" value="Isopropylmalate Dehydrogenase"/>
    <property type="match status" value="1"/>
</dbReference>
<dbReference type="InterPro" id="IPR053697">
    <property type="entry name" value="ICDH/HICDH"/>
</dbReference>
<dbReference type="InterPro" id="IPR019818">
    <property type="entry name" value="IsoCit/isopropylmalate_DH_CS"/>
</dbReference>
<dbReference type="InterPro" id="IPR024084">
    <property type="entry name" value="IsoPropMal-DH-like_dom"/>
</dbReference>
<dbReference type="InterPro" id="IPR011828">
    <property type="entry name" value="LEU3_arc"/>
</dbReference>
<dbReference type="NCBIfam" id="NF040855">
    <property type="entry name" value="iso_homocit_dh"/>
    <property type="match status" value="1"/>
</dbReference>
<dbReference type="NCBIfam" id="TIGR02088">
    <property type="entry name" value="LEU3_arch"/>
    <property type="match status" value="1"/>
</dbReference>
<dbReference type="PANTHER" id="PTHR11835">
    <property type="entry name" value="DECARBOXYLATING DEHYDROGENASES-ISOCITRATE, ISOPROPYLMALATE, TARTRATE"/>
    <property type="match status" value="1"/>
</dbReference>
<dbReference type="PANTHER" id="PTHR11835:SF34">
    <property type="entry name" value="ISOCITRATE DEHYDROGENASE [NAD] SUBUNIT ALPHA, MITOCHONDRIAL"/>
    <property type="match status" value="1"/>
</dbReference>
<dbReference type="Pfam" id="PF00180">
    <property type="entry name" value="Iso_dh"/>
    <property type="match status" value="1"/>
</dbReference>
<dbReference type="SMART" id="SM01329">
    <property type="entry name" value="Iso_dh"/>
    <property type="match status" value="1"/>
</dbReference>
<dbReference type="SUPFAM" id="SSF53659">
    <property type="entry name" value="Isocitrate/Isopropylmalate dehydrogenase-like"/>
    <property type="match status" value="1"/>
</dbReference>
<dbReference type="PROSITE" id="PS00470">
    <property type="entry name" value="IDH_IMDH"/>
    <property type="match status" value="1"/>
</dbReference>